<evidence type="ECO:0000255" key="1">
    <source>
        <dbReference type="HAMAP-Rule" id="MF_00695"/>
    </source>
</evidence>
<feature type="chain" id="PRO_1000132301" description="High frequency lysogenization protein HflD homolog">
    <location>
        <begin position="1"/>
        <end position="213"/>
    </location>
</feature>
<feature type="coiled-coil region" evidence="1">
    <location>
        <begin position="79"/>
        <end position="122"/>
    </location>
</feature>
<comment type="subcellular location">
    <subcellularLocation>
        <location>Cytoplasm</location>
    </subcellularLocation>
    <subcellularLocation>
        <location evidence="1">Cell inner membrane</location>
        <topology evidence="1">Peripheral membrane protein</topology>
        <orientation evidence="1">Cytoplasmic side</orientation>
    </subcellularLocation>
</comment>
<comment type="similarity">
    <text evidence="1">Belongs to the HflD family.</text>
</comment>
<dbReference type="EMBL" id="FM200053">
    <property type="protein sequence ID" value="CAR59685.1"/>
    <property type="molecule type" value="Genomic_DNA"/>
</dbReference>
<dbReference type="RefSeq" id="WP_001519653.1">
    <property type="nucleotide sequence ID" value="NC_011147.1"/>
</dbReference>
<dbReference type="SMR" id="B5BAE2"/>
<dbReference type="KEGG" id="sek:SSPA1502"/>
<dbReference type="HOGENOM" id="CLU_098920_0_0_6"/>
<dbReference type="Proteomes" id="UP000001869">
    <property type="component" value="Chromosome"/>
</dbReference>
<dbReference type="GO" id="GO:0005737">
    <property type="term" value="C:cytoplasm"/>
    <property type="evidence" value="ECO:0007669"/>
    <property type="project" value="UniProtKB-SubCell"/>
</dbReference>
<dbReference type="GO" id="GO:0005886">
    <property type="term" value="C:plasma membrane"/>
    <property type="evidence" value="ECO:0007669"/>
    <property type="project" value="UniProtKB-SubCell"/>
</dbReference>
<dbReference type="FunFam" id="1.10.3890.10:FF:000001">
    <property type="entry name" value="High frequency lysogenization protein HflD homolog"/>
    <property type="match status" value="1"/>
</dbReference>
<dbReference type="Gene3D" id="1.10.3890.10">
    <property type="entry name" value="HflD-like"/>
    <property type="match status" value="1"/>
</dbReference>
<dbReference type="HAMAP" id="MF_00695">
    <property type="entry name" value="HflD_protein"/>
    <property type="match status" value="1"/>
</dbReference>
<dbReference type="InterPro" id="IPR007451">
    <property type="entry name" value="HflD"/>
</dbReference>
<dbReference type="InterPro" id="IPR035932">
    <property type="entry name" value="HflD-like_sf"/>
</dbReference>
<dbReference type="NCBIfam" id="NF001245">
    <property type="entry name" value="PRK00218.1-1"/>
    <property type="match status" value="1"/>
</dbReference>
<dbReference type="NCBIfam" id="NF001246">
    <property type="entry name" value="PRK00218.1-2"/>
    <property type="match status" value="1"/>
</dbReference>
<dbReference type="NCBIfam" id="NF001248">
    <property type="entry name" value="PRK00218.1-4"/>
    <property type="match status" value="1"/>
</dbReference>
<dbReference type="NCBIfam" id="NF001249">
    <property type="entry name" value="PRK00218.1-5"/>
    <property type="match status" value="1"/>
</dbReference>
<dbReference type="PANTHER" id="PTHR38100">
    <property type="entry name" value="HIGH FREQUENCY LYSOGENIZATION PROTEIN HFLD"/>
    <property type="match status" value="1"/>
</dbReference>
<dbReference type="PANTHER" id="PTHR38100:SF1">
    <property type="entry name" value="HIGH FREQUENCY LYSOGENIZATION PROTEIN HFLD"/>
    <property type="match status" value="1"/>
</dbReference>
<dbReference type="Pfam" id="PF04356">
    <property type="entry name" value="DUF489"/>
    <property type="match status" value="1"/>
</dbReference>
<dbReference type="SUPFAM" id="SSF101322">
    <property type="entry name" value="YcfC-like"/>
    <property type="match status" value="1"/>
</dbReference>
<name>HFLD_SALPK</name>
<organism>
    <name type="scientific">Salmonella paratyphi A (strain AKU_12601)</name>
    <dbReference type="NCBI Taxonomy" id="554290"/>
    <lineage>
        <taxon>Bacteria</taxon>
        <taxon>Pseudomonadati</taxon>
        <taxon>Pseudomonadota</taxon>
        <taxon>Gammaproteobacteria</taxon>
        <taxon>Enterobacterales</taxon>
        <taxon>Enterobacteriaceae</taxon>
        <taxon>Salmonella</taxon>
    </lineage>
</organism>
<sequence>MAKNYYDITLALSGICQSARLVQQLAHQGHCDADALHVSLNSVIDMNPSSTLGVFGGSEANLRLGLETLLGVLNASSRQGLNAELTRYTLSLMVLERKLSSAKGALNTLGDRINGLQRQLDHFDLQSDTLMSAMAGIYVDVISPLGPRIQVTGSPAVLQSPQVQAKVRASLLAGIRAAVLWHQVGGGRLQLMFSRHRLTTQAKQILAHLTPEL</sequence>
<gene>
    <name evidence="1" type="primary">hflD</name>
    <name type="ordered locus">SSPA1502</name>
</gene>
<keyword id="KW-0997">Cell inner membrane</keyword>
<keyword id="KW-1003">Cell membrane</keyword>
<keyword id="KW-0175">Coiled coil</keyword>
<keyword id="KW-0963">Cytoplasm</keyword>
<keyword id="KW-0472">Membrane</keyword>
<reference key="1">
    <citation type="journal article" date="2009" name="BMC Genomics">
        <title>Pseudogene accumulation in the evolutionary histories of Salmonella enterica serovars Paratyphi A and Typhi.</title>
        <authorList>
            <person name="Holt K.E."/>
            <person name="Thomson N.R."/>
            <person name="Wain J."/>
            <person name="Langridge G.C."/>
            <person name="Hasan R."/>
            <person name="Bhutta Z.A."/>
            <person name="Quail M.A."/>
            <person name="Norbertczak H."/>
            <person name="Walker D."/>
            <person name="Simmonds M."/>
            <person name="White B."/>
            <person name="Bason N."/>
            <person name="Mungall K."/>
            <person name="Dougan G."/>
            <person name="Parkhill J."/>
        </authorList>
    </citation>
    <scope>NUCLEOTIDE SEQUENCE [LARGE SCALE GENOMIC DNA]</scope>
    <source>
        <strain>AKU_12601</strain>
    </source>
</reference>
<proteinExistence type="inferred from homology"/>
<protein>
    <recommendedName>
        <fullName evidence="1">High frequency lysogenization protein HflD homolog</fullName>
    </recommendedName>
</protein>
<accession>B5BAE2</accession>